<dbReference type="EMBL" id="BA000021">
    <property type="protein sequence ID" value="BAC24235.1"/>
    <property type="molecule type" value="Genomic_DNA"/>
</dbReference>
<dbReference type="SMR" id="Q8D3B2"/>
<dbReference type="STRING" id="36870.gene:10368567"/>
<dbReference type="KEGG" id="wbr:rpmF"/>
<dbReference type="eggNOG" id="COG0333">
    <property type="taxonomic scope" value="Bacteria"/>
</dbReference>
<dbReference type="HOGENOM" id="CLU_129084_2_1_6"/>
<dbReference type="OrthoDB" id="9801927at2"/>
<dbReference type="Proteomes" id="UP000000562">
    <property type="component" value="Chromosome"/>
</dbReference>
<dbReference type="GO" id="GO:0015934">
    <property type="term" value="C:large ribosomal subunit"/>
    <property type="evidence" value="ECO:0007669"/>
    <property type="project" value="InterPro"/>
</dbReference>
<dbReference type="GO" id="GO:0003735">
    <property type="term" value="F:structural constituent of ribosome"/>
    <property type="evidence" value="ECO:0007669"/>
    <property type="project" value="InterPro"/>
</dbReference>
<dbReference type="GO" id="GO:0006412">
    <property type="term" value="P:translation"/>
    <property type="evidence" value="ECO:0007669"/>
    <property type="project" value="UniProtKB-UniRule"/>
</dbReference>
<dbReference type="HAMAP" id="MF_00340">
    <property type="entry name" value="Ribosomal_bL32"/>
    <property type="match status" value="1"/>
</dbReference>
<dbReference type="InterPro" id="IPR002677">
    <property type="entry name" value="Ribosomal_bL32"/>
</dbReference>
<dbReference type="InterPro" id="IPR044957">
    <property type="entry name" value="Ribosomal_bL32_bact"/>
</dbReference>
<dbReference type="InterPro" id="IPR011332">
    <property type="entry name" value="Ribosomal_zn-bd"/>
</dbReference>
<dbReference type="NCBIfam" id="TIGR01031">
    <property type="entry name" value="rpmF_bact"/>
    <property type="match status" value="1"/>
</dbReference>
<dbReference type="PANTHER" id="PTHR35534">
    <property type="entry name" value="50S RIBOSOMAL PROTEIN L32"/>
    <property type="match status" value="1"/>
</dbReference>
<dbReference type="PANTHER" id="PTHR35534:SF1">
    <property type="entry name" value="LARGE RIBOSOMAL SUBUNIT PROTEIN BL32"/>
    <property type="match status" value="1"/>
</dbReference>
<dbReference type="Pfam" id="PF01783">
    <property type="entry name" value="Ribosomal_L32p"/>
    <property type="match status" value="1"/>
</dbReference>
<dbReference type="SUPFAM" id="SSF57829">
    <property type="entry name" value="Zn-binding ribosomal proteins"/>
    <property type="match status" value="1"/>
</dbReference>
<keyword id="KW-1185">Reference proteome</keyword>
<keyword id="KW-0687">Ribonucleoprotein</keyword>
<keyword id="KW-0689">Ribosomal protein</keyword>
<protein>
    <recommendedName>
        <fullName evidence="1">Large ribosomal subunit protein bL32</fullName>
    </recommendedName>
    <alternativeName>
        <fullName evidence="3">50S ribosomal protein L32</fullName>
    </alternativeName>
</protein>
<proteinExistence type="inferred from homology"/>
<comment type="similarity">
    <text evidence="1">Belongs to the bacterial ribosomal protein bL32 family.</text>
</comment>
<reference key="1">
    <citation type="journal article" date="2002" name="Nat. Genet.">
        <title>Genome sequence of the endocellular obligate symbiont of tsetse flies, Wigglesworthia glossinidia.</title>
        <authorList>
            <person name="Akman L."/>
            <person name="Yamashita A."/>
            <person name="Watanabe H."/>
            <person name="Oshima K."/>
            <person name="Shiba T."/>
            <person name="Hattori M."/>
            <person name="Aksoy S."/>
        </authorList>
    </citation>
    <scope>NUCLEOTIDE SEQUENCE [LARGE SCALE GENOMIC DNA]</scope>
</reference>
<feature type="chain" id="PRO_0000172438" description="Large ribosomal subunit protein bL32">
    <location>
        <begin position="1"/>
        <end position="59"/>
    </location>
</feature>
<feature type="region of interest" description="Disordered" evidence="2">
    <location>
        <begin position="1"/>
        <end position="20"/>
    </location>
</feature>
<feature type="compositionally biased region" description="Basic residues" evidence="2">
    <location>
        <begin position="7"/>
        <end position="19"/>
    </location>
</feature>
<name>RL32_WIGBR</name>
<accession>Q8D3B2</accession>
<evidence type="ECO:0000255" key="1">
    <source>
        <dbReference type="HAMAP-Rule" id="MF_00340"/>
    </source>
</evidence>
<evidence type="ECO:0000256" key="2">
    <source>
        <dbReference type="SAM" id="MobiDB-lite"/>
    </source>
</evidence>
<evidence type="ECO:0000305" key="3"/>
<sequence>MAVQKNKPTRSKRGMRRSHDKINIHKFSVDKVSGEIHIRHCLTKSGFYCGKKVLNKKNK</sequence>
<organism>
    <name type="scientific">Wigglesworthia glossinidia brevipalpis</name>
    <dbReference type="NCBI Taxonomy" id="36870"/>
    <lineage>
        <taxon>Bacteria</taxon>
        <taxon>Pseudomonadati</taxon>
        <taxon>Pseudomonadota</taxon>
        <taxon>Gammaproteobacteria</taxon>
        <taxon>Enterobacterales</taxon>
        <taxon>Erwiniaceae</taxon>
        <taxon>Wigglesworthia</taxon>
    </lineage>
</organism>
<gene>
    <name evidence="1" type="primary">rpmF</name>
    <name type="ordered locus">WIGBR0890</name>
</gene>